<evidence type="ECO:0000250" key="1">
    <source>
        <dbReference type="UniProtKB" id="Q8K424"/>
    </source>
</evidence>
<evidence type="ECO:0000256" key="2">
    <source>
        <dbReference type="SAM" id="MobiDB-lite"/>
    </source>
</evidence>
<evidence type="ECO:0000269" key="3">
    <source>
    </source>
</evidence>
<evidence type="ECO:0000269" key="4">
    <source>
    </source>
</evidence>
<evidence type="ECO:0000269" key="5">
    <source>
    </source>
</evidence>
<evidence type="ECO:0000269" key="6">
    <source>
    </source>
</evidence>
<evidence type="ECO:0000269" key="7">
    <source>
    </source>
</evidence>
<evidence type="ECO:0000269" key="8">
    <source>
    </source>
</evidence>
<evidence type="ECO:0000269" key="9">
    <source>
    </source>
</evidence>
<evidence type="ECO:0000269" key="10">
    <source>
    </source>
</evidence>
<evidence type="ECO:0000269" key="11">
    <source>
    </source>
</evidence>
<evidence type="ECO:0000303" key="12">
    <source ref="3"/>
</evidence>
<evidence type="ECO:0000305" key="13"/>
<evidence type="ECO:0007744" key="14">
    <source>
        <dbReference type="PDB" id="8GKA"/>
    </source>
</evidence>
<evidence type="ECO:0007744" key="15">
    <source>
        <dbReference type="PDB" id="8GKG"/>
    </source>
</evidence>
<evidence type="ECO:0007744" key="16">
    <source>
        <dbReference type="PDB" id="8V6K"/>
    </source>
</evidence>
<evidence type="ECO:0007744" key="17">
    <source>
        <dbReference type="PDB" id="8V6L"/>
    </source>
</evidence>
<evidence type="ECO:0007744" key="18">
    <source>
        <dbReference type="PDB" id="8V6M"/>
    </source>
</evidence>
<evidence type="ECO:0007744" key="19">
    <source>
        <dbReference type="PDB" id="8V6N"/>
    </source>
</evidence>
<evidence type="ECO:0007744" key="20">
    <source>
        <dbReference type="PDB" id="8V6O"/>
    </source>
</evidence>
<evidence type="ECO:0007829" key="21">
    <source>
        <dbReference type="PDB" id="6H9J"/>
    </source>
</evidence>
<evidence type="ECO:0007829" key="22">
    <source>
        <dbReference type="PDB" id="6MHO"/>
    </source>
</evidence>
<evidence type="ECO:0007829" key="23">
    <source>
        <dbReference type="PDB" id="6MHS"/>
    </source>
</evidence>
<evidence type="ECO:0007829" key="24">
    <source>
        <dbReference type="PDB" id="7QQN"/>
    </source>
</evidence>
<evidence type="ECO:0007829" key="25">
    <source>
        <dbReference type="PDB" id="7XJ0"/>
    </source>
</evidence>
<evidence type="ECO:0007829" key="26">
    <source>
        <dbReference type="PDB" id="7XJ1"/>
    </source>
</evidence>
<evidence type="ECO:0007829" key="27">
    <source>
        <dbReference type="PDB" id="8GKA"/>
    </source>
</evidence>
<evidence type="ECO:0007829" key="28">
    <source>
        <dbReference type="PDB" id="8V6K"/>
    </source>
</evidence>
<evidence type="ECO:0007829" key="29">
    <source>
        <dbReference type="PDB" id="8V6N"/>
    </source>
</evidence>
<evidence type="ECO:0007829" key="30">
    <source>
        <dbReference type="PDB" id="8V6O"/>
    </source>
</evidence>
<keyword id="KW-0002">3D-structure</keyword>
<keyword id="KW-0025">Alternative splicing</keyword>
<keyword id="KW-0040">ANK repeat</keyword>
<keyword id="KW-0106">Calcium</keyword>
<keyword id="KW-0107">Calcium channel</keyword>
<keyword id="KW-0109">Calcium transport</keyword>
<keyword id="KW-1003">Cell membrane</keyword>
<keyword id="KW-0963">Cytoplasm</keyword>
<keyword id="KW-0225">Disease variant</keyword>
<keyword id="KW-0407">Ion channel</keyword>
<keyword id="KW-0406">Ion transport</keyword>
<keyword id="KW-0458">Lysosome</keyword>
<keyword id="KW-0472">Membrane</keyword>
<keyword id="KW-0479">Metal-binding</keyword>
<keyword id="KW-1007">Palmoplantar keratoderma</keyword>
<keyword id="KW-1267">Proteomics identification</keyword>
<keyword id="KW-1185">Reference proteome</keyword>
<keyword id="KW-0677">Repeat</keyword>
<keyword id="KW-0915">Sodium</keyword>
<keyword id="KW-0812">Transmembrane</keyword>
<keyword id="KW-1133">Transmembrane helix</keyword>
<keyword id="KW-0813">Transport</keyword>
<organism>
    <name type="scientific">Homo sapiens</name>
    <name type="common">Human</name>
    <dbReference type="NCBI Taxonomy" id="9606"/>
    <lineage>
        <taxon>Eukaryota</taxon>
        <taxon>Metazoa</taxon>
        <taxon>Chordata</taxon>
        <taxon>Craniata</taxon>
        <taxon>Vertebrata</taxon>
        <taxon>Euteleostomi</taxon>
        <taxon>Mammalia</taxon>
        <taxon>Eutheria</taxon>
        <taxon>Euarchontoglires</taxon>
        <taxon>Primates</taxon>
        <taxon>Haplorrhini</taxon>
        <taxon>Catarrhini</taxon>
        <taxon>Hominidae</taxon>
        <taxon>Homo</taxon>
    </lineage>
</organism>
<dbReference type="EMBL" id="AJ487035">
    <property type="protein sequence ID" value="CAD31711.2"/>
    <property type="molecule type" value="mRNA"/>
</dbReference>
<dbReference type="EMBL" id="AF514998">
    <property type="protein sequence ID" value="AAM54027.1"/>
    <property type="molecule type" value="mRNA"/>
</dbReference>
<dbReference type="EMBL" id="AY118267">
    <property type="protein sequence ID" value="AAM80558.1"/>
    <property type="molecule type" value="mRNA"/>
</dbReference>
<dbReference type="EMBL" id="AY118268">
    <property type="protein sequence ID" value="AAM80559.1"/>
    <property type="molecule type" value="mRNA"/>
</dbReference>
<dbReference type="CCDS" id="CCDS11029.1">
    <molecule id="Q8NET8-1"/>
</dbReference>
<dbReference type="CCDS" id="CCDS58500.1">
    <molecule id="Q8NET8-2"/>
</dbReference>
<dbReference type="RefSeq" id="NP_001245134.1">
    <molecule id="Q8NET8-2"/>
    <property type="nucleotide sequence ID" value="NM_001258205.2"/>
</dbReference>
<dbReference type="RefSeq" id="NP_659505.1">
    <molecule id="Q8NET8-1"/>
    <property type="nucleotide sequence ID" value="NM_145068.4"/>
</dbReference>
<dbReference type="PDB" id="6H9J">
    <property type="method" value="X-ray"/>
    <property type="resolution" value="1.83 A"/>
    <property type="chains" value="D=229-250"/>
</dbReference>
<dbReference type="PDB" id="6HA6">
    <property type="method" value="X-ray"/>
    <property type="resolution" value="1.98 A"/>
    <property type="chains" value="D=220-246"/>
</dbReference>
<dbReference type="PDB" id="6MHO">
    <property type="method" value="EM"/>
    <property type="resolution" value="3.40 A"/>
    <property type="chains" value="A/B/C/D=2-790"/>
</dbReference>
<dbReference type="PDB" id="6MHS">
    <property type="method" value="EM"/>
    <property type="resolution" value="3.20 A"/>
    <property type="chains" value="A/B/C/D=2-790"/>
</dbReference>
<dbReference type="PDB" id="6MHV">
    <property type="method" value="EM"/>
    <property type="resolution" value="3.50 A"/>
    <property type="chains" value="A/B/C/D=2-790"/>
</dbReference>
<dbReference type="PDB" id="6MHW">
    <property type="method" value="EM"/>
    <property type="resolution" value="4.00 A"/>
    <property type="chains" value="A/B/C/D=2-790"/>
</dbReference>
<dbReference type="PDB" id="6MHX">
    <property type="method" value="EM"/>
    <property type="resolution" value="4.00 A"/>
    <property type="chains" value="A/B/C/D=2-790"/>
</dbReference>
<dbReference type="PDB" id="6OT2">
    <property type="method" value="EM"/>
    <property type="resolution" value="4.10 A"/>
    <property type="chains" value="A/B/C/D=96-790"/>
</dbReference>
<dbReference type="PDB" id="6OT5">
    <property type="method" value="EM"/>
    <property type="resolution" value="3.60 A"/>
    <property type="chains" value="A/B/C/D=110-790"/>
</dbReference>
<dbReference type="PDB" id="6UW4">
    <property type="method" value="EM"/>
    <property type="resolution" value="3.10 A"/>
    <property type="chains" value="A/B/C/D=1-790"/>
</dbReference>
<dbReference type="PDB" id="6UW6">
    <property type="method" value="EM"/>
    <property type="resolution" value="3.66 A"/>
    <property type="chains" value="A/B/C/D=1-790"/>
</dbReference>
<dbReference type="PDB" id="6UW8">
    <property type="method" value="EM"/>
    <property type="resolution" value="4.02 A"/>
    <property type="chains" value="A/B/C/D=1-790"/>
</dbReference>
<dbReference type="PDB" id="6UW9">
    <property type="method" value="EM"/>
    <property type="resolution" value="4.33 A"/>
    <property type="chains" value="A/B/C/D=1-790"/>
</dbReference>
<dbReference type="PDB" id="7QQN">
    <property type="method" value="X-ray"/>
    <property type="resolution" value="2.45 A"/>
    <property type="chains" value="B/D=781-790"/>
</dbReference>
<dbReference type="PDB" id="7XJ0">
    <property type="method" value="EM"/>
    <property type="resolution" value="2.53 A"/>
    <property type="chains" value="A/B/C/D=1-790"/>
</dbReference>
<dbReference type="PDB" id="7XJ1">
    <property type="method" value="EM"/>
    <property type="resolution" value="2.93 A"/>
    <property type="chains" value="A/B/C/D=1-790"/>
</dbReference>
<dbReference type="PDB" id="7XJ2">
    <property type="method" value="EM"/>
    <property type="resolution" value="3.64 A"/>
    <property type="chains" value="A/B/C/D=1-790"/>
</dbReference>
<dbReference type="PDB" id="7XJ3">
    <property type="method" value="EM"/>
    <property type="resolution" value="3.54 A"/>
    <property type="chains" value="A/B/C/D=1-790"/>
</dbReference>
<dbReference type="PDB" id="8GKA">
    <property type="method" value="EM"/>
    <property type="resolution" value="2.55 A"/>
    <property type="chains" value="A/B/C/D=1-790"/>
</dbReference>
<dbReference type="PDB" id="8GKG">
    <property type="method" value="EM"/>
    <property type="resolution" value="4.38 A"/>
    <property type="chains" value="A/B/C/D/E=1-790"/>
</dbReference>
<dbReference type="PDB" id="8V6K">
    <property type="method" value="EM"/>
    <property type="resolution" value="2.46 A"/>
    <property type="chains" value="A/B/C/D=1-790"/>
</dbReference>
<dbReference type="PDB" id="8V6L">
    <property type="method" value="EM"/>
    <property type="resolution" value="3.68 A"/>
    <property type="chains" value="A/B/C/D=1-790"/>
</dbReference>
<dbReference type="PDB" id="8V6M">
    <property type="method" value="EM"/>
    <property type="resolution" value="3.63 A"/>
    <property type="chains" value="A/B/C/D=1-790"/>
</dbReference>
<dbReference type="PDB" id="8V6N">
    <property type="method" value="EM"/>
    <property type="resolution" value="2.59 A"/>
    <property type="chains" value="A/B/C/D=1-790"/>
</dbReference>
<dbReference type="PDB" id="8V6O">
    <property type="method" value="EM"/>
    <property type="resolution" value="2.83 A"/>
    <property type="chains" value="A/B/C/D=1-790"/>
</dbReference>
<dbReference type="PDBsum" id="6H9J"/>
<dbReference type="PDBsum" id="6HA6"/>
<dbReference type="PDBsum" id="6MHO"/>
<dbReference type="PDBsum" id="6MHS"/>
<dbReference type="PDBsum" id="6MHV"/>
<dbReference type="PDBsum" id="6MHW"/>
<dbReference type="PDBsum" id="6MHX"/>
<dbReference type="PDBsum" id="6OT2"/>
<dbReference type="PDBsum" id="6OT5"/>
<dbReference type="PDBsum" id="6UW4"/>
<dbReference type="PDBsum" id="6UW6"/>
<dbReference type="PDBsum" id="6UW8"/>
<dbReference type="PDBsum" id="6UW9"/>
<dbReference type="PDBsum" id="7QQN"/>
<dbReference type="PDBsum" id="7XJ0"/>
<dbReference type="PDBsum" id="7XJ1"/>
<dbReference type="PDBsum" id="7XJ2"/>
<dbReference type="PDBsum" id="7XJ3"/>
<dbReference type="PDBsum" id="8GKA"/>
<dbReference type="PDBsum" id="8GKG"/>
<dbReference type="PDBsum" id="8V6K"/>
<dbReference type="PDBsum" id="8V6L"/>
<dbReference type="PDBsum" id="8V6M"/>
<dbReference type="PDBsum" id="8V6N"/>
<dbReference type="PDBsum" id="8V6O"/>
<dbReference type="EMDB" id="EMD-20192"/>
<dbReference type="EMDB" id="EMD-20194"/>
<dbReference type="EMDB" id="EMD-20917"/>
<dbReference type="EMDB" id="EMD-20918"/>
<dbReference type="EMDB" id="EMD-20919"/>
<dbReference type="EMDB" id="EMD-20920"/>
<dbReference type="EMDB" id="EMD-40181"/>
<dbReference type="EMDB" id="EMD-40183"/>
<dbReference type="EMDB" id="EMD-42994"/>
<dbReference type="EMDB" id="EMD-42995"/>
<dbReference type="EMDB" id="EMD-42996"/>
<dbReference type="EMDB" id="EMD-42997"/>
<dbReference type="EMDB" id="EMD-42998"/>
<dbReference type="EMDB" id="EMD-9115"/>
<dbReference type="EMDB" id="EMD-9117"/>
<dbReference type="EMDB" id="EMD-9119"/>
<dbReference type="EMDB" id="EMD-9120"/>
<dbReference type="EMDB" id="EMD-9121"/>
<dbReference type="SMR" id="Q8NET8"/>
<dbReference type="BioGRID" id="127821">
    <property type="interactions" value="7"/>
</dbReference>
<dbReference type="CORUM" id="Q8NET8"/>
<dbReference type="FunCoup" id="Q8NET8">
    <property type="interactions" value="34"/>
</dbReference>
<dbReference type="IntAct" id="Q8NET8">
    <property type="interactions" value="5"/>
</dbReference>
<dbReference type="STRING" id="9606.ENSP00000301365"/>
<dbReference type="BindingDB" id="Q8NET8"/>
<dbReference type="ChEMBL" id="CHEMBL5522"/>
<dbReference type="DrugBank" id="DB11345">
    <property type="generic name" value="(S)-camphor"/>
</dbReference>
<dbReference type="DrugBank" id="DB11288">
    <property type="generic name" value="Borneol"/>
</dbReference>
<dbReference type="DrugBank" id="DB01744">
    <property type="generic name" value="Camphor"/>
</dbReference>
<dbReference type="DrugBank" id="DB09061">
    <property type="generic name" value="Cannabidiol"/>
</dbReference>
<dbReference type="DrugBank" id="DB16404">
    <property type="generic name" value="Carvacrol"/>
</dbReference>
<dbReference type="DrugBank" id="DB14184">
    <property type="generic name" value="Cinnamaldehyde"/>
</dbReference>
<dbReference type="DrugBank" id="DB09086">
    <property type="generic name" value="Eugenol"/>
</dbReference>
<dbReference type="DrugBank" id="DB00825">
    <property type="generic name" value="Levomenthol"/>
</dbReference>
<dbReference type="DrugBank" id="DB14009">
    <property type="generic name" value="Medical Cannabis"/>
</dbReference>
<dbReference type="DrugBank" id="DB14011">
    <property type="generic name" value="Nabiximols"/>
</dbReference>
<dbReference type="DrugBank" id="DB11755">
    <property type="generic name" value="Tetrahydrocannabivarin"/>
</dbReference>
<dbReference type="GuidetoPHARMACOLOGY" id="509"/>
<dbReference type="TCDB" id="1.A.4.2.9">
    <property type="family name" value="the transient receptor potential ca2+/cation channel (trp-cc) family"/>
</dbReference>
<dbReference type="iPTMnet" id="Q8NET8"/>
<dbReference type="PhosphoSitePlus" id="Q8NET8"/>
<dbReference type="BioMuta" id="TRPV3"/>
<dbReference type="DMDM" id="62901456"/>
<dbReference type="jPOST" id="Q8NET8"/>
<dbReference type="MassIVE" id="Q8NET8"/>
<dbReference type="PaxDb" id="9606-ENSP00000301365"/>
<dbReference type="PeptideAtlas" id="Q8NET8"/>
<dbReference type="ABCD" id="Q8NET8">
    <property type="antibodies" value="2 sequenced antibodies"/>
</dbReference>
<dbReference type="Antibodypedia" id="23030">
    <property type="antibodies" value="415 antibodies from 33 providers"/>
</dbReference>
<dbReference type="DNASU" id="162514"/>
<dbReference type="Ensembl" id="ENST00000301365.8">
    <molecule id="Q8NET8-2"/>
    <property type="protein sequence ID" value="ENSP00000301365.4"/>
    <property type="gene ID" value="ENSG00000167723.15"/>
</dbReference>
<dbReference type="Ensembl" id="ENST00000572519.1">
    <molecule id="Q8NET8-3"/>
    <property type="protein sequence ID" value="ENSP00000460215.1"/>
    <property type="gene ID" value="ENSG00000167723.15"/>
</dbReference>
<dbReference type="Ensembl" id="ENST00000576742.6">
    <molecule id="Q8NET8-1"/>
    <property type="protein sequence ID" value="ENSP00000461518.2"/>
    <property type="gene ID" value="ENSG00000167723.15"/>
</dbReference>
<dbReference type="GeneID" id="162514"/>
<dbReference type="KEGG" id="hsa:162514"/>
<dbReference type="MANE-Select" id="ENST00000576742.6">
    <property type="protein sequence ID" value="ENSP00000461518.2"/>
    <property type="RefSeq nucleotide sequence ID" value="NM_145068.4"/>
    <property type="RefSeq protein sequence ID" value="NP_659505.1"/>
</dbReference>
<dbReference type="UCSC" id="uc002fvr.4">
    <molecule id="Q8NET8-1"/>
    <property type="organism name" value="human"/>
</dbReference>
<dbReference type="AGR" id="HGNC:18084"/>
<dbReference type="CTD" id="162514"/>
<dbReference type="DisGeNET" id="162514"/>
<dbReference type="GeneCards" id="TRPV3"/>
<dbReference type="HGNC" id="HGNC:18084">
    <property type="gene designation" value="TRPV3"/>
</dbReference>
<dbReference type="HPA" id="ENSG00000167723">
    <property type="expression patterns" value="Group enriched (intestine, skeletal muscle, skin)"/>
</dbReference>
<dbReference type="MalaCards" id="TRPV3"/>
<dbReference type="MIM" id="607066">
    <property type="type" value="gene"/>
</dbReference>
<dbReference type="MIM" id="614594">
    <property type="type" value="phenotype"/>
</dbReference>
<dbReference type="MIM" id="616400">
    <property type="type" value="phenotype"/>
</dbReference>
<dbReference type="neXtProt" id="NX_Q8NET8"/>
<dbReference type="OpenTargets" id="ENSG00000167723"/>
<dbReference type="Orphanet" id="448264">
    <property type="disease" value="Isolated focal non-epidermolytic palmoplantar keratoderma"/>
</dbReference>
<dbReference type="Orphanet" id="659">
    <property type="disease" value="Mutilating palmoplantar keratoderma with periorificial keratotic plaques"/>
</dbReference>
<dbReference type="PharmGKB" id="PA38481"/>
<dbReference type="VEuPathDB" id="HostDB:ENSG00000167723"/>
<dbReference type="eggNOG" id="KOG3676">
    <property type="taxonomic scope" value="Eukaryota"/>
</dbReference>
<dbReference type="GeneTree" id="ENSGT00940000158281"/>
<dbReference type="HOGENOM" id="CLU_012795_0_0_1"/>
<dbReference type="InParanoid" id="Q8NET8"/>
<dbReference type="OMA" id="GNCEDMD"/>
<dbReference type="OrthoDB" id="533508at2759"/>
<dbReference type="PAN-GO" id="Q8NET8">
    <property type="GO annotations" value="3 GO annotations based on evolutionary models"/>
</dbReference>
<dbReference type="PhylomeDB" id="Q8NET8"/>
<dbReference type="TreeFam" id="TF314711"/>
<dbReference type="PathwayCommons" id="Q8NET8"/>
<dbReference type="Reactome" id="R-HSA-3295583">
    <property type="pathway name" value="TRP channels"/>
</dbReference>
<dbReference type="SIGNOR" id="Q8NET8"/>
<dbReference type="BioGRID-ORCS" id="162514">
    <property type="hits" value="108 hits in 1161 CRISPR screens"/>
</dbReference>
<dbReference type="ChiTaRS" id="TRPV3">
    <property type="organism name" value="human"/>
</dbReference>
<dbReference type="GeneWiki" id="TRPV3"/>
<dbReference type="GenomeRNAi" id="162514"/>
<dbReference type="Pharos" id="Q8NET8">
    <property type="development level" value="Tchem"/>
</dbReference>
<dbReference type="PRO" id="PR:Q8NET8"/>
<dbReference type="Proteomes" id="UP000005640">
    <property type="component" value="Chromosome 17"/>
</dbReference>
<dbReference type="RNAct" id="Q8NET8">
    <property type="molecule type" value="protein"/>
</dbReference>
<dbReference type="Bgee" id="ENSG00000167723">
    <property type="expression patterns" value="Expressed in skin of leg and 91 other cell types or tissues"/>
</dbReference>
<dbReference type="ExpressionAtlas" id="Q8NET8">
    <property type="expression patterns" value="baseline and differential"/>
</dbReference>
<dbReference type="GO" id="GO:0005929">
    <property type="term" value="C:cilium"/>
    <property type="evidence" value="ECO:0000318"/>
    <property type="project" value="GO_Central"/>
</dbReference>
<dbReference type="GO" id="GO:0005737">
    <property type="term" value="C:cytoplasm"/>
    <property type="evidence" value="ECO:0000314"/>
    <property type="project" value="UniProtKB"/>
</dbReference>
<dbReference type="GO" id="GO:0005764">
    <property type="term" value="C:lysosome"/>
    <property type="evidence" value="ECO:0000314"/>
    <property type="project" value="UniProtKB"/>
</dbReference>
<dbReference type="GO" id="GO:0005886">
    <property type="term" value="C:plasma membrane"/>
    <property type="evidence" value="ECO:0000314"/>
    <property type="project" value="UniProtKB"/>
</dbReference>
<dbReference type="GO" id="GO:0043235">
    <property type="term" value="C:receptor complex"/>
    <property type="evidence" value="ECO:0000314"/>
    <property type="project" value="MGI"/>
</dbReference>
<dbReference type="GO" id="GO:0005262">
    <property type="term" value="F:calcium channel activity"/>
    <property type="evidence" value="ECO:0000314"/>
    <property type="project" value="UniProtKB"/>
</dbReference>
<dbReference type="GO" id="GO:0042802">
    <property type="term" value="F:identical protein binding"/>
    <property type="evidence" value="ECO:0000353"/>
    <property type="project" value="IntAct"/>
</dbReference>
<dbReference type="GO" id="GO:0046872">
    <property type="term" value="F:metal ion binding"/>
    <property type="evidence" value="ECO:0007669"/>
    <property type="project" value="UniProtKB-KW"/>
</dbReference>
<dbReference type="GO" id="GO:0005272">
    <property type="term" value="F:sodium channel activity"/>
    <property type="evidence" value="ECO:0000314"/>
    <property type="project" value="UniProtKB"/>
</dbReference>
<dbReference type="GO" id="GO:0007015">
    <property type="term" value="P:actin filament organization"/>
    <property type="evidence" value="ECO:0000318"/>
    <property type="project" value="GO_Central"/>
</dbReference>
<dbReference type="GO" id="GO:0098703">
    <property type="term" value="P:calcium ion import across plasma membrane"/>
    <property type="evidence" value="ECO:0000318"/>
    <property type="project" value="GO_Central"/>
</dbReference>
<dbReference type="GO" id="GO:0070588">
    <property type="term" value="P:calcium ion transmembrane transport"/>
    <property type="evidence" value="ECO:0000304"/>
    <property type="project" value="Reactome"/>
</dbReference>
<dbReference type="GO" id="GO:0042636">
    <property type="term" value="P:negative regulation of hair cycle"/>
    <property type="evidence" value="ECO:0000315"/>
    <property type="project" value="UniProtKB"/>
</dbReference>
<dbReference type="GO" id="GO:0007231">
    <property type="term" value="P:osmosensory signaling pathway"/>
    <property type="evidence" value="ECO:0000318"/>
    <property type="project" value="GO_Central"/>
</dbReference>
<dbReference type="GO" id="GO:0090280">
    <property type="term" value="P:positive regulation of calcium ion import"/>
    <property type="evidence" value="ECO:0007669"/>
    <property type="project" value="Ensembl"/>
</dbReference>
<dbReference type="GO" id="GO:0009266">
    <property type="term" value="P:response to temperature stimulus"/>
    <property type="evidence" value="ECO:0007669"/>
    <property type="project" value="Ensembl"/>
</dbReference>
<dbReference type="CDD" id="cd22194">
    <property type="entry name" value="TRPV3"/>
    <property type="match status" value="1"/>
</dbReference>
<dbReference type="FunFam" id="1.10.287.70:FF:000085">
    <property type="entry name" value="Transient receptor potential cation channel subfamily V member 3"/>
    <property type="match status" value="1"/>
</dbReference>
<dbReference type="FunFam" id="1.25.40.20:FF:000101">
    <property type="entry name" value="Transient receptor potential cation channel subfamily V member 3"/>
    <property type="match status" value="1"/>
</dbReference>
<dbReference type="Gene3D" id="1.10.287.70">
    <property type="match status" value="1"/>
</dbReference>
<dbReference type="Gene3D" id="1.25.40.20">
    <property type="entry name" value="Ankyrin repeat-containing domain"/>
    <property type="match status" value="1"/>
</dbReference>
<dbReference type="InterPro" id="IPR002110">
    <property type="entry name" value="Ankyrin_rpt"/>
</dbReference>
<dbReference type="InterPro" id="IPR036770">
    <property type="entry name" value="Ankyrin_rpt-contain_sf"/>
</dbReference>
<dbReference type="InterPro" id="IPR005821">
    <property type="entry name" value="Ion_trans_dom"/>
</dbReference>
<dbReference type="InterPro" id="IPR024862">
    <property type="entry name" value="TRPV"/>
</dbReference>
<dbReference type="InterPro" id="IPR008347">
    <property type="entry name" value="TrpV1-4"/>
</dbReference>
<dbReference type="PANTHER" id="PTHR10582:SF6">
    <property type="entry name" value="TRANSIENT RECEPTOR POTENTIAL CATION CHANNEL SUBFAMILY V MEMBER 3"/>
    <property type="match status" value="1"/>
</dbReference>
<dbReference type="PANTHER" id="PTHR10582">
    <property type="entry name" value="TRANSIENT RECEPTOR POTENTIAL ION CHANNEL PROTEIN"/>
    <property type="match status" value="1"/>
</dbReference>
<dbReference type="Pfam" id="PF00023">
    <property type="entry name" value="Ank"/>
    <property type="match status" value="2"/>
</dbReference>
<dbReference type="Pfam" id="PF12796">
    <property type="entry name" value="Ank_2"/>
    <property type="match status" value="1"/>
</dbReference>
<dbReference type="Pfam" id="PF00520">
    <property type="entry name" value="Ion_trans"/>
    <property type="match status" value="1"/>
</dbReference>
<dbReference type="PRINTS" id="PR01768">
    <property type="entry name" value="TRPVRECEPTOR"/>
</dbReference>
<dbReference type="SMART" id="SM00248">
    <property type="entry name" value="ANK"/>
    <property type="match status" value="4"/>
</dbReference>
<dbReference type="SUPFAM" id="SSF48403">
    <property type="entry name" value="Ankyrin repeat"/>
    <property type="match status" value="1"/>
</dbReference>
<dbReference type="PROSITE" id="PS50297">
    <property type="entry name" value="ANK_REP_REGION"/>
    <property type="match status" value="1"/>
</dbReference>
<dbReference type="PROSITE" id="PS50088">
    <property type="entry name" value="ANK_REPEAT"/>
    <property type="match status" value="2"/>
</dbReference>
<protein>
    <recommendedName>
        <fullName>Transient receptor potential cation channel subfamily V member 3</fullName>
        <shortName>TrpV3</shortName>
    </recommendedName>
    <alternativeName>
        <fullName>Vanilloid receptor-like 3</fullName>
        <shortName>VRL-3</shortName>
    </alternativeName>
</protein>
<gene>
    <name type="primary">TRPV3</name>
</gene>
<reference key="1">
    <citation type="journal article" date="2002" name="Nature">
        <title>TRPV3 is a temperature-sensitive vanilloid receptor-like protein.</title>
        <authorList>
            <person name="Smith G.D."/>
            <person name="Gunthorpe M.J."/>
            <person name="Kelsell R.E."/>
            <person name="Hayes P.D."/>
            <person name="Reilly P."/>
            <person name="Facer P."/>
            <person name="Wright J.E."/>
            <person name="Jerman J.C."/>
            <person name="Walhin J.-P."/>
            <person name="Ooi L."/>
            <person name="Egerton J."/>
            <person name="Charles K.J."/>
            <person name="Smart D."/>
            <person name="Randall A.D."/>
            <person name="Anand P."/>
            <person name="Davis J.B."/>
        </authorList>
    </citation>
    <scope>NUCLEOTIDE SEQUENCE [MRNA] (ISOFORM 1)</scope>
    <scope>FUNCTION</scope>
    <scope>TISSUE SPECIFICITY</scope>
    <scope>INTERACTION WITH TRPV1</scope>
    <scope>VARIANTS VAL-25 AND GLY-117</scope>
    <scope>TRANSPORTER ACTIVITY</scope>
</reference>
<reference key="2">
    <citation type="journal article" date="2002" name="Nature">
        <title>TRPV3 is a calcium-permeable temperature-sensitive cation channel.</title>
        <authorList>
            <person name="Xu H."/>
            <person name="Ramsey I.S."/>
            <person name="Kotecha S.A."/>
            <person name="Moran M.M."/>
            <person name="Chong J.A."/>
            <person name="Lawson D."/>
            <person name="Ge P."/>
            <person name="Lilly J."/>
            <person name="Silos-Santiago I."/>
            <person name="Xie Y."/>
            <person name="DiStefano P.S."/>
            <person name="Curtis R."/>
            <person name="Clapham D.E."/>
        </authorList>
    </citation>
    <scope>NUCLEOTIDE SEQUENCE [MRNA] (ISOFORM 1)</scope>
    <scope>FUNCTION</scope>
    <scope>TISSUE SPECIFICITY</scope>
    <scope>TRANSPORTER ACTIVITY</scope>
</reference>
<reference key="3">
    <citation type="submission" date="2002-06" db="EMBL/GenBank/DDBJ databases">
        <title>Human TRPV3, a new member of the vanilloid receptor family.</title>
        <authorList>
            <person name="Poea-Guyon S."/>
            <person name="Renard S."/>
            <person name="Chalon P."/>
            <person name="Kaghad M."/>
            <person name="Caput D."/>
            <person name="Besnard F."/>
        </authorList>
    </citation>
    <scope>NUCLEOTIDE SEQUENCE [MRNA] (ISOFORMS 2 AND 3)</scope>
</reference>
<reference key="4">
    <citation type="journal article" date="2011" name="J. Invest. Dermatol.">
        <title>Activation of transient receptor potential vanilloid-3 inhibits human hair growth.</title>
        <authorList>
            <person name="Borbiro I."/>
            <person name="Lisztes E."/>
            <person name="Toth B.I."/>
            <person name="Czifra G."/>
            <person name="Olah A."/>
            <person name="Szollosi A.G."/>
            <person name="Szentandrassy N."/>
            <person name="Nanasi P.P."/>
            <person name="Peter Z."/>
            <person name="Paus R."/>
            <person name="Kovacs L."/>
            <person name="Biro T."/>
        </authorList>
    </citation>
    <scope>FUNCTION AS NEGATIVE REGULATOR OF HAIR GROWTH</scope>
    <scope>TISSUE SPECIFICITY</scope>
</reference>
<reference key="5">
    <citation type="journal article" date="2016" name="Traffic">
        <title>Sorting Nexin 11 Regulates Lysosomal Degradation of Plasma Membrane TRPV3.</title>
        <authorList>
            <person name="Li C."/>
            <person name="Ma W."/>
            <person name="Yin S."/>
            <person name="Liang X."/>
            <person name="Shu X."/>
            <person name="Pei D."/>
            <person name="Egan T.M."/>
            <person name="Huang J."/>
            <person name="Pan A."/>
            <person name="Li Z."/>
        </authorList>
    </citation>
    <scope>FUNCTION</scope>
    <scope>TRANSPORTER ACTIVITY</scope>
    <scope>SUBCELLULAR LOCATION</scope>
    <scope>INTERACTION WITH SNX11</scope>
</reference>
<reference key="6">
    <citation type="journal article" date="2015" name="J. Invest. Dermatol.">
        <title>A gain-of-function mutation in TRPV3 causes focal palmoplantar keratoderma in a Chinese family.</title>
        <authorList>
            <person name="He Y."/>
            <person name="Zeng K."/>
            <person name="Zhang X."/>
            <person name="Chen Q."/>
            <person name="Wu J."/>
            <person name="Li H."/>
            <person name="Zhou Y."/>
            <person name="Glusman G."/>
            <person name="Roach J."/>
            <person name="Etheridge A."/>
            <person name="Qing S."/>
            <person name="Tian Q."/>
            <person name="Lee I."/>
            <person name="Tian X."/>
            <person name="Wang X."/>
            <person name="Wu Z."/>
            <person name="Hood L."/>
            <person name="Ding Y."/>
            <person name="Wang K."/>
        </authorList>
    </citation>
    <scope>INVOLVEMENT IN FNEPPK2</scope>
    <scope>VARIANT FNEPPK2 PRO-580</scope>
    <scope>CHARACTERIZATION OF VARIANT FNEPPK2 PRO-580</scope>
</reference>
<reference evidence="14 15" key="7">
    <citation type="journal article" date="2023" name="Nature">
        <title>A pentameric TRPV3 channel with a dilated pore.</title>
        <authorList>
            <person name="Lansky S."/>
            <person name="Betancourt J.M."/>
            <person name="Zhang J."/>
            <person name="Jiang Y."/>
            <person name="Kim E.D."/>
            <person name="Paknejad N."/>
            <person name="Nimigean C.M."/>
            <person name="Yuan P."/>
            <person name="Scheuring S."/>
        </authorList>
    </citation>
    <scope>STRUCTURE BY ELECTRON MICROSCOPY (2.55 ANGSTROMS) OF TETRAMER AND PENTAMER IN COMPLEX WITH SODIUM</scope>
    <scope>FUNCTION</scope>
    <scope>TRANSPORTER ACTIVITY</scope>
    <scope>ACTIVITY REGULATION</scope>
    <scope>SUBUNIT</scope>
    <scope>SUBCELLULAR LOCATION</scope>
    <scope>TOPOLOGY</scope>
    <scope>ANK REPEATS</scope>
</reference>
<reference evidence="16 17 18 19 20" key="8">
    <citation type="journal article" date="2024" name="Sci. Adv.">
        <title>TRPV3 activation by different agonists accompanied by lipid dissociation from the vanilloid site.</title>
        <authorList>
            <person name="Nadezhdin K.D."/>
            <person name="Neuberger A."/>
            <person name="Khosrof L.S."/>
            <person name="Talyzina I.A."/>
            <person name="Khau J."/>
            <person name="Yelshanskaya M.V."/>
            <person name="Sobolevsky A.I."/>
        </authorList>
    </citation>
    <scope>STRUCTURE BY ELECTRON MICROSCOPY (2.46 ANGSTROMS) OF TETRAMER IN COMPLEXES WITH SODIUM AND AGONISTS</scope>
    <scope>FUNCTION</scope>
    <scope>TRANSPORTER ACTIVITY</scope>
    <scope>ACTIVITY REGULATION</scope>
    <scope>SUBUNIT</scope>
    <scope>SUBCELLULAR LOCATION</scope>
    <scope>TOPOLOGY</scope>
    <scope>ANK REPEATS</scope>
    <scope>MUTAGENESIS OF LEU-557; ALA-560; ASN-561 AND LEU-563</scope>
</reference>
<reference key="9">
    <citation type="journal article" date="2012" name="Am. J. Hum. Genet.">
        <title>Exome sequencing reveals mutations in TRPV3 as a cause of Olmsted syndrome.</title>
        <authorList>
            <person name="Lin Z."/>
            <person name="Chen Q."/>
            <person name="Lee M."/>
            <person name="Cao X."/>
            <person name="Zhang J."/>
            <person name="Ma D."/>
            <person name="Chen L."/>
            <person name="Hu X."/>
            <person name="Wang H."/>
            <person name="Wang X."/>
            <person name="Zhang P."/>
            <person name="Liu X."/>
            <person name="Guan L."/>
            <person name="Tang Y."/>
            <person name="Yang H."/>
            <person name="Tu P."/>
            <person name="Bu D."/>
            <person name="Zhu X."/>
            <person name="Wang K."/>
            <person name="Li R."/>
            <person name="Yang Y."/>
        </authorList>
    </citation>
    <scope>VARIANTS OLMS1 SER-573; CYS-573 AND GLY-692</scope>
    <scope>CHARACTERIZATION OF VARIANTS OLMS1 SER-573; CYS-573 AND GLY-692</scope>
</reference>
<reference key="10">
    <citation type="journal article" date="2012" name="Br. J. Dermatol.">
        <title>Recurrent heterozygous missense mutation, p.Gly573Ser, in the TRPV3 gene in an Indian boy with sporadic Olmsted syndrome.</title>
        <authorList>
            <person name="Lai-Cheong J.E."/>
            <person name="Sethuraman G."/>
            <person name="Ramam M."/>
            <person name="Stone K."/>
            <person name="Simpson M.A."/>
            <person name="McGrath J.A."/>
        </authorList>
    </citation>
    <scope>VARIANT OLMS1 SER-573</scope>
</reference>
<accession>Q8NET8</accession>
<accession>Q8NDW7</accession>
<accession>Q8NET9</accession>
<accession>Q8NFH2</accession>
<name>TRPV3_HUMAN</name>
<sequence>MKAHPKEMVPLMGKRVAAPSGNPAILPEKRPAEITPTKKSAHFFLEIEGFEPNPTVAKTSPPVFSKPMDSNIRQCISGNCDDMDSPQSPQDDVTETPSNPNSPSAQLAKEEQRRKKRRLKKRIFAAVSEGCVEELVELLVELQELCRRRHDEDVPDFLMHKLTASDTGKTCLMKALLNINPNTKEIVRILLAFAEENDILGRFINAEYTEEAYEGQTALNIAIERRQGDIAALLIAAGADVNAHAKGAFFNPKYQHEGFYFGETPLALAACTNQPEIVQLLMEHEQTDITSRDSRGNNILHALVTVAEDFKTQNDFVKRMYDMILLRSGNWELETTRNNDGLTPLQLAAKMGKAEILKYILSREIKEKRLRSLSRKFTDWAYGPVSSSLYDLTNVDTTTDNSVLEITVYNTNIDNRHEMLTLEPLHTLLHMKWKKFAKHMFFLSFCFYFFYNITLTLVSYYRPREEEAIPHPLALTHKMGWLQLLGRMFVLIWAMCISVKEGIAIFLLRPSDLQSILSDAWFHFVFFIQAVLVILSVFLYLFAYKEYLACLVLAMALGWANMLYYTRGFQSMGMYSVMIQKVILHDVLKFLFVYIVFLLGFGVALASLIEKCPKDNKDCSSYGSFSDAVLELFKLTIGLGDLNIQQNSKYPILFLFLLITYVILTFVLLLNMLIALMGETVENVSKESERIWRLQRARTILEFEKMLPEWLRSRFRMGELCKVAEDDFRLCLRINEVKWTEWKTHVSFLNEDPGPVRRTDFNKIQDSSRNNSKTTLNAFEEVEEFPETSV</sequence>
<feature type="chain" id="PRO_0000215345" description="Transient receptor potential cation channel subfamily V member 3">
    <location>
        <begin position="1"/>
        <end position="790"/>
    </location>
</feature>
<feature type="topological domain" description="Cytoplasmic" evidence="10 11 14 16 17 18 19 20">
    <location>
        <begin position="1"/>
        <end position="430"/>
    </location>
</feature>
<feature type="transmembrane region" description="Helical; Name=S1" evidence="10 11 14 16 17 18 19 20">
    <location>
        <begin position="431"/>
        <end position="460"/>
    </location>
</feature>
<feature type="topological domain" description="Extracellular" evidence="10 11 14 16 17 18 19 20">
    <location>
        <begin position="461"/>
        <end position="479"/>
    </location>
</feature>
<feature type="transmembrane region" description="Helical; Name=S2" evidence="10 11 14 16 17 18 19 20">
    <location>
        <begin position="480"/>
        <end position="508"/>
    </location>
</feature>
<feature type="topological domain" description="Cytoplasmic" evidence="10 11 14 16 17 18 19 20">
    <location>
        <begin position="509"/>
        <end position="519"/>
    </location>
</feature>
<feature type="transmembrane region" description="Helical; Name=S3" evidence="10 11 14 16 17 18 19 20">
    <location>
        <begin position="520"/>
        <end position="540"/>
    </location>
</feature>
<feature type="topological domain" description="Extracellular" evidence="10 11 14 16 17 18 19 20">
    <location>
        <begin position="541"/>
        <end position="545"/>
    </location>
</feature>
<feature type="transmembrane region" description="Helical; Name=S4" evidence="10 11 14 16 17 18 19 20">
    <location>
        <begin position="546"/>
        <end position="566"/>
    </location>
</feature>
<feature type="topological domain" description="Cytoplasmic" evidence="10 11 14 16 17 18 19 20">
    <location>
        <begin position="567"/>
        <end position="569"/>
    </location>
</feature>
<feature type="transmembrane region" description="Helical; Name=S5" evidence="10 11 14 16 17 18 19 20">
    <location>
        <begin position="570"/>
        <end position="608"/>
    </location>
</feature>
<feature type="topological domain" description="Extracellular" evidence="10 11 14 16 17 18 19 20">
    <location>
        <begin position="609"/>
        <end position="620"/>
    </location>
</feature>
<feature type="intramembrane region" description="Pore-forming" evidence="10 11 14 16 17 18 19 20">
    <location>
        <begin position="621"/>
        <end position="646"/>
    </location>
</feature>
<feature type="topological domain" description="Extracellular" evidence="10 11 14 16 17 18 19 20">
    <location>
        <begin position="647"/>
        <end position="649"/>
    </location>
</feature>
<feature type="transmembrane region" description="Helical; Name=S6" evidence="10 11 14 16 17 18 19 20">
    <location>
        <begin position="650"/>
        <end position="686"/>
    </location>
</feature>
<feature type="topological domain" description="Cytoplasmic" evidence="10 11 14 16 17 18 19 20">
    <location>
        <begin position="687"/>
        <end position="790"/>
    </location>
</feature>
<feature type="repeat" description="ANK 1" evidence="10 11 14 16 17 18 19 20">
    <location>
        <begin position="117"/>
        <end position="148"/>
    </location>
</feature>
<feature type="repeat" description="ANK 2" evidence="10 11 14 16 17 18 19 20">
    <location>
        <begin position="170"/>
        <end position="198"/>
    </location>
</feature>
<feature type="repeat" description="ANK 3" evidence="10 11 14 16 17 18 19 20">
    <location>
        <begin position="214"/>
        <end position="243"/>
    </location>
</feature>
<feature type="repeat" description="ANK 4" evidence="10 11 14 16 17 18 19 20">
    <location>
        <begin position="261"/>
        <end position="291"/>
    </location>
</feature>
<feature type="repeat" description="ANK 5" evidence="10 11 14 16 17 18 19 20">
    <location>
        <begin position="298"/>
        <end position="330"/>
    </location>
</feature>
<feature type="repeat" description="ANK 6" evidence="10 11 14 16 17 18 19 20">
    <location>
        <begin position="340"/>
        <end position="362"/>
    </location>
</feature>
<feature type="repeat" description="ANK 7" evidence="10 11 14 16 17 18 19 20">
    <location>
        <begin position="398"/>
        <end position="420"/>
    </location>
</feature>
<feature type="region of interest" description="Disordered" evidence="2">
    <location>
        <begin position="15"/>
        <end position="34"/>
    </location>
</feature>
<feature type="region of interest" description="Disordered" evidence="2">
    <location>
        <begin position="52"/>
        <end position="71"/>
    </location>
</feature>
<feature type="region of interest" description="Disordered" evidence="2">
    <location>
        <begin position="76"/>
        <end position="112"/>
    </location>
</feature>
<feature type="compositionally biased region" description="Polar residues" evidence="2">
    <location>
        <begin position="95"/>
        <end position="105"/>
    </location>
</feature>
<feature type="binding site" evidence="10 11 14 16 18">
    <location>
        <position position="638"/>
    </location>
    <ligand>
        <name>Na(+)</name>
        <dbReference type="ChEBI" id="CHEBI:29101"/>
        <note>ligand shared among four neighboring subunits</note>
    </ligand>
</feature>
<feature type="splice variant" id="VSP_013433" description="In isoform 2." evidence="12">
    <original>T</original>
    <variation>TA</variation>
    <location>
        <position position="759"/>
    </location>
</feature>
<feature type="splice variant" id="VSP_013434" description="In isoform 3." evidence="12">
    <original>DFNKIQ</original>
    <variation>GTVAVR</variation>
    <location>
        <begin position="760"/>
        <end position="765"/>
    </location>
</feature>
<feature type="splice variant" id="VSP_013435" description="In isoform 3." evidence="12">
    <location>
        <begin position="766"/>
        <end position="790"/>
    </location>
</feature>
<feature type="sequence variant" id="VAR_052388" description="In dbSNP:rs322965." evidence="4">
    <original>I</original>
    <variation>V</variation>
    <location>
        <position position="25"/>
    </location>
</feature>
<feature type="sequence variant" id="VAR_052389" description="In dbSNP:rs322937." evidence="4">
    <original>R</original>
    <variation>G</variation>
    <location>
        <position position="117"/>
    </location>
</feature>
<feature type="sequence variant" id="VAR_067920" description="In OLMS1; gain of function mutation; results in constitutive channel activation; dbSNP:rs199473704." evidence="6">
    <original>G</original>
    <variation>C</variation>
    <location>
        <position position="573"/>
    </location>
</feature>
<feature type="sequence variant" id="VAR_067921" description="In OLMS1; gain of function mutation; results in constitutive channel activation; dbSNP:rs199473704." evidence="6 7">
    <original>G</original>
    <variation>S</variation>
    <location>
        <position position="573"/>
    </location>
</feature>
<feature type="sequence variant" id="VAR_073832" description="In FNEPPK2; gain of function mutation; dbSNP:rs786205869." evidence="8">
    <original>Q</original>
    <variation>P</variation>
    <location>
        <position position="580"/>
    </location>
</feature>
<feature type="sequence variant" id="VAR_067922" description="In OLMS1; gain of function mutation; results in constitutive channel activation; dbSNP:rs199473705." evidence="6">
    <original>W</original>
    <variation>G</variation>
    <location>
        <position position="692"/>
    </location>
</feature>
<feature type="sequence variant" id="VAR_052390" description="In dbSNP:rs7212634.">
    <original>T</original>
    <variation>I</variation>
    <location>
        <position position="774"/>
    </location>
</feature>
<feature type="mutagenesis site" description="Impairs channel activation by tetrahydrocannabivarin." evidence="11">
    <original>L</original>
    <variation>A</variation>
    <location>
        <position position="557"/>
    </location>
</feature>
<feature type="mutagenesis site" description="Impairs channel activation by tetrahydrocannabivarin." evidence="11">
    <original>A</original>
    <variation>L</variation>
    <variation>M</variation>
    <location>
        <position position="560"/>
    </location>
</feature>
<feature type="mutagenesis site" description="Impairs channel activation by tetrahydrocannabivarin." evidence="11">
    <original>N</original>
    <variation>A</variation>
    <location>
        <position position="561"/>
    </location>
</feature>
<feature type="mutagenesis site" description="Impairs channel activation by tetrahydrocannabivarin." evidence="11">
    <original>L</original>
    <variation>A</variation>
    <location>
        <position position="563"/>
    </location>
</feature>
<feature type="sequence conflict" description="In Ref. 3; AAM80558/AAM80559." evidence="13" ref="3">
    <original>E</original>
    <variation>G</variation>
    <location>
        <position position="283"/>
    </location>
</feature>
<feature type="strand" evidence="29">
    <location>
        <begin position="72"/>
        <end position="74"/>
    </location>
</feature>
<feature type="helix" evidence="28">
    <location>
        <begin position="120"/>
        <end position="126"/>
    </location>
</feature>
<feature type="turn" evidence="28">
    <location>
        <begin position="127"/>
        <end position="130"/>
    </location>
</feature>
<feature type="helix" evidence="28">
    <location>
        <begin position="132"/>
        <end position="148"/>
    </location>
</feature>
<feature type="strand" evidence="28">
    <location>
        <begin position="151"/>
        <end position="153"/>
    </location>
</feature>
<feature type="helix" evidence="28">
    <location>
        <begin position="154"/>
        <end position="161"/>
    </location>
</feature>
<feature type="strand" evidence="28">
    <location>
        <begin position="165"/>
        <end position="167"/>
    </location>
</feature>
<feature type="helix" evidence="28">
    <location>
        <begin position="171"/>
        <end position="177"/>
    </location>
</feature>
<feature type="helix" evidence="28">
    <location>
        <begin position="183"/>
        <end position="196"/>
    </location>
</feature>
<feature type="turn" evidence="28">
    <location>
        <begin position="200"/>
        <end position="202"/>
    </location>
</feature>
<feature type="strand" evidence="28">
    <location>
        <begin position="210"/>
        <end position="212"/>
    </location>
</feature>
<feature type="helix" evidence="28">
    <location>
        <begin position="218"/>
        <end position="224"/>
    </location>
</feature>
<feature type="helix" evidence="21">
    <location>
        <begin position="230"/>
        <end position="235"/>
    </location>
</feature>
<feature type="turn" evidence="29">
    <location>
        <begin position="236"/>
        <end position="238"/>
    </location>
</feature>
<feature type="turn" evidence="28">
    <location>
        <begin position="248"/>
        <end position="250"/>
    </location>
</feature>
<feature type="strand" evidence="27">
    <location>
        <begin position="253"/>
        <end position="257"/>
    </location>
</feature>
<feature type="helix" evidence="28">
    <location>
        <begin position="265"/>
        <end position="271"/>
    </location>
</feature>
<feature type="helix" evidence="28">
    <location>
        <begin position="275"/>
        <end position="283"/>
    </location>
</feature>
<feature type="helix" evidence="28">
    <location>
        <begin position="299"/>
        <end position="306"/>
    </location>
</feature>
<feature type="turn" evidence="28">
    <location>
        <begin position="310"/>
        <end position="312"/>
    </location>
</feature>
<feature type="helix" evidence="28">
    <location>
        <begin position="316"/>
        <end position="328"/>
    </location>
</feature>
<feature type="helix" evidence="28">
    <location>
        <begin position="332"/>
        <end position="335"/>
    </location>
</feature>
<feature type="helix" evidence="28">
    <location>
        <begin position="344"/>
        <end position="351"/>
    </location>
</feature>
<feature type="helix" evidence="28">
    <location>
        <begin position="354"/>
        <end position="361"/>
    </location>
</feature>
<feature type="strand" evidence="27">
    <location>
        <begin position="367"/>
        <end position="369"/>
    </location>
</feature>
<feature type="helix" evidence="28">
    <location>
        <begin position="371"/>
        <end position="373"/>
    </location>
</feature>
<feature type="strand" evidence="28">
    <location>
        <begin position="375"/>
        <end position="382"/>
    </location>
</feature>
<feature type="strand" evidence="28">
    <location>
        <begin position="385"/>
        <end position="391"/>
    </location>
</feature>
<feature type="turn" evidence="28">
    <location>
        <begin position="393"/>
        <end position="395"/>
    </location>
</feature>
<feature type="strand" evidence="28">
    <location>
        <begin position="399"/>
        <end position="401"/>
    </location>
</feature>
<feature type="helix" evidence="28">
    <location>
        <begin position="403"/>
        <end position="409"/>
    </location>
</feature>
<feature type="strand" evidence="26">
    <location>
        <begin position="412"/>
        <end position="414"/>
    </location>
</feature>
<feature type="helix" evidence="28">
    <location>
        <begin position="416"/>
        <end position="419"/>
    </location>
</feature>
<feature type="helix" evidence="28">
    <location>
        <begin position="423"/>
        <end position="435"/>
    </location>
</feature>
<feature type="helix" evidence="28">
    <location>
        <begin position="437"/>
        <end position="460"/>
    </location>
</feature>
<feature type="helix" evidence="28">
    <location>
        <begin position="465"/>
        <end position="468"/>
    </location>
</feature>
<feature type="strand" evidence="30">
    <location>
        <begin position="477"/>
        <end position="479"/>
    </location>
</feature>
<feature type="helix" evidence="28">
    <location>
        <begin position="483"/>
        <end position="508"/>
    </location>
</feature>
<feature type="helix" evidence="28">
    <location>
        <begin position="513"/>
        <end position="519"/>
    </location>
</feature>
<feature type="helix" evidence="28">
    <location>
        <begin position="521"/>
        <end position="542"/>
    </location>
</feature>
<feature type="helix" evidence="28">
    <location>
        <begin position="547"/>
        <end position="560"/>
    </location>
</feature>
<feature type="helix" evidence="28">
    <location>
        <begin position="561"/>
        <end position="568"/>
    </location>
</feature>
<feature type="helix" evidence="28">
    <location>
        <begin position="570"/>
        <end position="585"/>
    </location>
</feature>
<feature type="helix" evidence="28">
    <location>
        <begin position="587"/>
        <end position="606"/>
    </location>
</feature>
<feature type="helix" evidence="22">
    <location>
        <begin position="609"/>
        <end position="611"/>
    </location>
</feature>
<feature type="helix" evidence="30">
    <location>
        <begin position="612"/>
        <end position="614"/>
    </location>
</feature>
<feature type="turn" evidence="23">
    <location>
        <begin position="617"/>
        <end position="619"/>
    </location>
</feature>
<feature type="strand" evidence="25">
    <location>
        <begin position="621"/>
        <end position="624"/>
    </location>
</feature>
<feature type="helix" evidence="28">
    <location>
        <begin position="625"/>
        <end position="637"/>
    </location>
</feature>
<feature type="strand" evidence="28">
    <location>
        <begin position="646"/>
        <end position="649"/>
    </location>
</feature>
<feature type="helix" evidence="28">
    <location>
        <begin position="651"/>
        <end position="665"/>
    </location>
</feature>
<feature type="turn" evidence="28">
    <location>
        <begin position="666"/>
        <end position="668"/>
    </location>
</feature>
<feature type="helix" evidence="28">
    <location>
        <begin position="669"/>
        <end position="685"/>
    </location>
</feature>
<feature type="helix" evidence="28">
    <location>
        <begin position="688"/>
        <end position="706"/>
    </location>
</feature>
<feature type="helix" evidence="28">
    <location>
        <begin position="709"/>
        <end position="714"/>
    </location>
</feature>
<feature type="strand" evidence="28">
    <location>
        <begin position="719"/>
        <end position="724"/>
    </location>
</feature>
<feature type="strand" evidence="28">
    <location>
        <begin position="727"/>
        <end position="737"/>
    </location>
</feature>
<feature type="helix" evidence="29">
    <location>
        <begin position="739"/>
        <end position="747"/>
    </location>
</feature>
<feature type="turn" evidence="29">
    <location>
        <begin position="748"/>
        <end position="750"/>
    </location>
</feature>
<feature type="strand" evidence="24">
    <location>
        <begin position="787"/>
        <end position="789"/>
    </location>
</feature>
<proteinExistence type="evidence at protein level"/>
<comment type="function">
    <text evidence="3 4 5 9 10 11">Non-selective calcium permeant cation channel (PubMed:12077604, PubMed:12077606, PubMed:26818531, PubMed:37648856, PubMed:38691614). It is activated by innocuous (warm) temperatures and shows an increased response at noxious temperatures greater than 39 degrees Celsius (PubMed:12077604, PubMed:12077606). Activation exhibits an outward rectification (PubMed:12077604). The channel pore can dilate to provide permeability to larger cations (PubMed:37648856). May associate with TRPV1 and may modulate its activity (PubMed:12077606). Is a negative regulator of hair growth and cycling: TRPV3-coupled signaling suppresses keratinocyte proliferation in hair follicles and induces apoptosis and premature hair follicle regression (catagen) (PubMed:21593771).</text>
</comment>
<comment type="catalytic activity">
    <reaction evidence="3 4 9 11">
        <text>Ca(2+)(in) = Ca(2+)(out)</text>
        <dbReference type="Rhea" id="RHEA:29671"/>
        <dbReference type="ChEBI" id="CHEBI:29108"/>
    </reaction>
</comment>
<comment type="catalytic activity">
    <reaction evidence="1">
        <text>Mg(2+)(in) = Mg(2+)(out)</text>
        <dbReference type="Rhea" id="RHEA:29827"/>
        <dbReference type="ChEBI" id="CHEBI:18420"/>
    </reaction>
</comment>
<comment type="catalytic activity">
    <reaction evidence="3 10 11">
        <text>Na(+)(in) = Na(+)(out)</text>
        <dbReference type="Rhea" id="RHEA:34963"/>
        <dbReference type="ChEBI" id="CHEBI:29101"/>
    </reaction>
</comment>
<comment type="catalytic activity">
    <reaction evidence="3">
        <text>K(+)(in) = K(+)(out)</text>
        <dbReference type="Rhea" id="RHEA:29463"/>
        <dbReference type="ChEBI" id="CHEBI:29103"/>
    </reaction>
</comment>
<comment type="activity regulation">
    <text evidence="10 11">Activated by cannabinoid that binds to the vanilloid binding pocket (PubMed:38691614). Diphenylboronic anhydride induces pore dilation and enhances cation permeability by promoting the conversion to a homopentamer (PubMed:37648856).</text>
</comment>
<comment type="subunit">
    <text evidence="4 9 10 11">Homotetramer (PubMed:37648856, PubMed:38691614). May convert from a homotetramer to a homopentamer to allow pore dilation (PubMed:37648856). Interacts with TRPV1; may form a heteromeric channel with TRPV1 (PubMed:12077606). Interacts with SNX11; this interaction promotes TRPV3 trafficking from the cell membrane to lysosome for degradation (PubMed:26818531).</text>
</comment>
<comment type="interaction">
    <interactant intactId="EBI-26518537">
        <id>Q8NET8-1</id>
    </interactant>
    <interactant intactId="EBI-26518537">
        <id>Q8NET8-1</id>
        <label>TRPV3</label>
    </interactant>
    <organismsDiffer>false</organismsDiffer>
    <experiments>2</experiments>
</comment>
<comment type="subcellular location">
    <subcellularLocation>
        <location evidence="9 10 11">Cell membrane</location>
        <topology evidence="10 11">Multi-pass membrane protein</topology>
    </subcellularLocation>
    <subcellularLocation>
        <location evidence="9">Cytoplasm</location>
    </subcellularLocation>
    <subcellularLocation>
        <location evidence="9">Lysosome</location>
    </subcellularLocation>
    <text evidence="9">Targeted to lysosome for degradation in a SNX11-dependent manner.</text>
</comment>
<comment type="alternative products">
    <event type="alternative splicing"/>
    <isoform>
        <id>Q8NET8-1</id>
        <name>1</name>
        <sequence type="displayed"/>
    </isoform>
    <isoform>
        <id>Q8NET8-2</id>
        <name>2</name>
        <name>A</name>
        <sequence type="described" ref="VSP_013433"/>
    </isoform>
    <isoform>
        <id>Q8NET8-3</id>
        <name>3</name>
        <name>B</name>
        <sequence type="described" ref="VSP_013434 VSP_013435"/>
    </isoform>
</comment>
<comment type="tissue specificity">
    <text evidence="3 4 5">Abundantly expressed in CNS. Widely expressed at low levels. Detected in dorsal root ganglion (at protein level). Expressed in the keratinocyte layers of the outer root sheath and, to lesser extent, to the matrix of the hair follicles (at protein level).</text>
</comment>
<comment type="disease" evidence="6 7">
    <disease id="DI-03430">
        <name>Olmsted syndrome 1</name>
        <acronym>OLMS1</acronym>
        <description>An autosomal dominant, rare congenital disorder characterized by bilateral mutilating palmoplantar keratoderma and periorificial keratotic plaques with severe itching at all lesions. Diffuse alopecia, constriction of digits, and onychodystrophy have also been reported. Infections and squamous cell carcinomas can arise on the keratotic areas. The digital constriction may progress to autoamputation of fingers and toes.</description>
        <dbReference type="MIM" id="614594"/>
    </disease>
    <text>The disease is caused by variants affecting the gene represented in this entry.</text>
</comment>
<comment type="disease" evidence="8">
    <disease id="DI-04445">
        <name>Palmoplantar keratoderma, non-epidermolytic, focal 2</name>
        <acronym>FNEPPK2</acronym>
        <description>A dermatological disorder characterized by non-epidermolytic, abnormal thickening of the skin on the palms and soles. Focal palmoplantar keratoderma consists of localized areas of hyperkeratosis located mainly on pressure points and sites of recurrent friction.</description>
        <dbReference type="MIM" id="616400"/>
    </disease>
    <text>The disease is caused by variants affecting the gene represented in this entry.</text>
</comment>
<comment type="similarity">
    <text evidence="13">Belongs to the transient receptor (TC 1.A.4) family. TrpV subfamily. TRPV3 sub-subfamily.</text>
</comment>
<comment type="online information" name="Transient receptor potential cation channel, subfamily V, member 3 (TRPV3)">
    <link uri="https://databases.lovd.nl/shared/genes/TRPV3"/>
    <text>Leiden Open Variation Database (LOVD)</text>
</comment>